<keyword id="KW-0028">Amino-acid biosynthesis</keyword>
<keyword id="KW-0963">Cytoplasm</keyword>
<keyword id="KW-0220">Diaminopimelate biosynthesis</keyword>
<keyword id="KW-0456">Lyase</keyword>
<keyword id="KW-0457">Lysine biosynthesis</keyword>
<keyword id="KW-0704">Schiff base</keyword>
<sequence>MTQAATLSPTPFGRVVTAMVTPFDASGAVDLSVAANLARHLVEQGSDGLLVCGTTGESPTLSWDEQLQLLQAVRDAVGSDAKVLAGTGSNSTAEAVEATKEAAAAGADGALVVVPYYNKPPQEGLEAHFRAIAEAAPELPLMLYNIPGRTGCSIAPATVARLMDCPNVVSFKAASGTTEEVTALRLACGPQLAIYSGDDGLTLPMLAVGAVGVVSVGSHVAGPEIRAMIEAYLNGDGASALALHDALIPLFKALFATTNPIPVKAALELNGWSVGAPRPPLCSLSDDMKRSLSNAMAALRQT</sequence>
<evidence type="ECO:0000255" key="1">
    <source>
        <dbReference type="HAMAP-Rule" id="MF_00418"/>
    </source>
</evidence>
<evidence type="ECO:0000305" key="2"/>
<organism>
    <name type="scientific">Synechococcus sp. (strain CC9605)</name>
    <dbReference type="NCBI Taxonomy" id="110662"/>
    <lineage>
        <taxon>Bacteria</taxon>
        <taxon>Bacillati</taxon>
        <taxon>Cyanobacteriota</taxon>
        <taxon>Cyanophyceae</taxon>
        <taxon>Synechococcales</taxon>
        <taxon>Synechococcaceae</taxon>
        <taxon>Synechococcus</taxon>
    </lineage>
</organism>
<protein>
    <recommendedName>
        <fullName evidence="1">4-hydroxy-tetrahydrodipicolinate synthase</fullName>
        <shortName evidence="1">HTPA synthase</shortName>
        <ecNumber evidence="1">4.3.3.7</ecNumber>
    </recommendedName>
</protein>
<gene>
    <name evidence="1" type="primary">dapA</name>
    <name type="ordered locus">Syncc9605_0068</name>
</gene>
<dbReference type="EC" id="4.3.3.7" evidence="1"/>
<dbReference type="EMBL" id="CP000110">
    <property type="protein sequence ID" value="ABB33847.1"/>
    <property type="molecule type" value="Genomic_DNA"/>
</dbReference>
<dbReference type="RefSeq" id="WP_011363107.1">
    <property type="nucleotide sequence ID" value="NC_007516.1"/>
</dbReference>
<dbReference type="SMR" id="Q3ANI5"/>
<dbReference type="STRING" id="110662.Syncc9605_0068"/>
<dbReference type="KEGG" id="syd:Syncc9605_0068"/>
<dbReference type="eggNOG" id="COG0329">
    <property type="taxonomic scope" value="Bacteria"/>
</dbReference>
<dbReference type="HOGENOM" id="CLU_049343_7_1_3"/>
<dbReference type="OrthoDB" id="9782828at2"/>
<dbReference type="UniPathway" id="UPA00034">
    <property type="reaction ID" value="UER00017"/>
</dbReference>
<dbReference type="GO" id="GO:0005829">
    <property type="term" value="C:cytosol"/>
    <property type="evidence" value="ECO:0007669"/>
    <property type="project" value="TreeGrafter"/>
</dbReference>
<dbReference type="GO" id="GO:0008840">
    <property type="term" value="F:4-hydroxy-tetrahydrodipicolinate synthase activity"/>
    <property type="evidence" value="ECO:0007669"/>
    <property type="project" value="UniProtKB-UniRule"/>
</dbReference>
<dbReference type="GO" id="GO:0019877">
    <property type="term" value="P:diaminopimelate biosynthetic process"/>
    <property type="evidence" value="ECO:0007669"/>
    <property type="project" value="UniProtKB-UniRule"/>
</dbReference>
<dbReference type="GO" id="GO:0009089">
    <property type="term" value="P:lysine biosynthetic process via diaminopimelate"/>
    <property type="evidence" value="ECO:0007669"/>
    <property type="project" value="UniProtKB-UniRule"/>
</dbReference>
<dbReference type="CDD" id="cd00950">
    <property type="entry name" value="DHDPS"/>
    <property type="match status" value="1"/>
</dbReference>
<dbReference type="Gene3D" id="3.20.20.70">
    <property type="entry name" value="Aldolase class I"/>
    <property type="match status" value="1"/>
</dbReference>
<dbReference type="HAMAP" id="MF_00418">
    <property type="entry name" value="DapA"/>
    <property type="match status" value="1"/>
</dbReference>
<dbReference type="InterPro" id="IPR013785">
    <property type="entry name" value="Aldolase_TIM"/>
</dbReference>
<dbReference type="InterPro" id="IPR005263">
    <property type="entry name" value="DapA"/>
</dbReference>
<dbReference type="InterPro" id="IPR002220">
    <property type="entry name" value="DapA-like"/>
</dbReference>
<dbReference type="InterPro" id="IPR020625">
    <property type="entry name" value="Schiff_base-form_aldolases_AS"/>
</dbReference>
<dbReference type="InterPro" id="IPR020624">
    <property type="entry name" value="Schiff_base-form_aldolases_CS"/>
</dbReference>
<dbReference type="NCBIfam" id="TIGR00674">
    <property type="entry name" value="dapA"/>
    <property type="match status" value="1"/>
</dbReference>
<dbReference type="PANTHER" id="PTHR12128:SF66">
    <property type="entry name" value="4-HYDROXY-2-OXOGLUTARATE ALDOLASE, MITOCHONDRIAL"/>
    <property type="match status" value="1"/>
</dbReference>
<dbReference type="PANTHER" id="PTHR12128">
    <property type="entry name" value="DIHYDRODIPICOLINATE SYNTHASE"/>
    <property type="match status" value="1"/>
</dbReference>
<dbReference type="Pfam" id="PF00701">
    <property type="entry name" value="DHDPS"/>
    <property type="match status" value="1"/>
</dbReference>
<dbReference type="PIRSF" id="PIRSF001365">
    <property type="entry name" value="DHDPS"/>
    <property type="match status" value="1"/>
</dbReference>
<dbReference type="PRINTS" id="PR00146">
    <property type="entry name" value="DHPICSNTHASE"/>
</dbReference>
<dbReference type="SMART" id="SM01130">
    <property type="entry name" value="DHDPS"/>
    <property type="match status" value="1"/>
</dbReference>
<dbReference type="SUPFAM" id="SSF51569">
    <property type="entry name" value="Aldolase"/>
    <property type="match status" value="1"/>
</dbReference>
<dbReference type="PROSITE" id="PS00665">
    <property type="entry name" value="DHDPS_1"/>
    <property type="match status" value="1"/>
</dbReference>
<dbReference type="PROSITE" id="PS00666">
    <property type="entry name" value="DHDPS_2"/>
    <property type="match status" value="1"/>
</dbReference>
<proteinExistence type="inferred from homology"/>
<accession>Q3ANI5</accession>
<feature type="chain" id="PRO_1000050290" description="4-hydroxy-tetrahydrodipicolinate synthase">
    <location>
        <begin position="1"/>
        <end position="302"/>
    </location>
</feature>
<feature type="active site" description="Proton donor/acceptor" evidence="1">
    <location>
        <position position="144"/>
    </location>
</feature>
<feature type="active site" description="Schiff-base intermediate with substrate" evidence="1">
    <location>
        <position position="172"/>
    </location>
</feature>
<feature type="binding site" evidence="1">
    <location>
        <position position="55"/>
    </location>
    <ligand>
        <name>pyruvate</name>
        <dbReference type="ChEBI" id="CHEBI:15361"/>
    </ligand>
</feature>
<feature type="binding site" evidence="1">
    <location>
        <position position="214"/>
    </location>
    <ligand>
        <name>pyruvate</name>
        <dbReference type="ChEBI" id="CHEBI:15361"/>
    </ligand>
</feature>
<feature type="site" description="Part of a proton relay during catalysis" evidence="1">
    <location>
        <position position="54"/>
    </location>
</feature>
<feature type="site" description="Part of a proton relay during catalysis" evidence="1">
    <location>
        <position position="117"/>
    </location>
</feature>
<comment type="function">
    <text evidence="1">Catalyzes the condensation of (S)-aspartate-beta-semialdehyde [(S)-ASA] and pyruvate to 4-hydroxy-tetrahydrodipicolinate (HTPA).</text>
</comment>
<comment type="catalytic activity">
    <reaction evidence="1">
        <text>L-aspartate 4-semialdehyde + pyruvate = (2S,4S)-4-hydroxy-2,3,4,5-tetrahydrodipicolinate + H2O + H(+)</text>
        <dbReference type="Rhea" id="RHEA:34171"/>
        <dbReference type="ChEBI" id="CHEBI:15361"/>
        <dbReference type="ChEBI" id="CHEBI:15377"/>
        <dbReference type="ChEBI" id="CHEBI:15378"/>
        <dbReference type="ChEBI" id="CHEBI:67139"/>
        <dbReference type="ChEBI" id="CHEBI:537519"/>
        <dbReference type="EC" id="4.3.3.7"/>
    </reaction>
</comment>
<comment type="pathway">
    <text evidence="1">Amino-acid biosynthesis; L-lysine biosynthesis via DAP pathway; (S)-tetrahydrodipicolinate from L-aspartate: step 3/4.</text>
</comment>
<comment type="subunit">
    <text evidence="1">Homotetramer; dimer of dimers.</text>
</comment>
<comment type="subcellular location">
    <subcellularLocation>
        <location evidence="1">Cytoplasm</location>
    </subcellularLocation>
</comment>
<comment type="similarity">
    <text evidence="1">Belongs to the DapA family.</text>
</comment>
<comment type="caution">
    <text evidence="2">Was originally thought to be a dihydrodipicolinate synthase (DHDPS), catalyzing the condensation of (S)-aspartate-beta-semialdehyde [(S)-ASA] and pyruvate to dihydrodipicolinate (DHDP). However, it was shown in E.coli that the product of the enzymatic reaction is not dihydrodipicolinate but in fact (4S)-4-hydroxy-2,3,4,5-tetrahydro-(2S)-dipicolinic acid (HTPA), and that the consecutive dehydration reaction leading to DHDP is not spontaneous but catalyzed by DapB.</text>
</comment>
<reference key="1">
    <citation type="submission" date="2005-07" db="EMBL/GenBank/DDBJ databases">
        <title>Complete sequence of Synechococcus sp. CC9605.</title>
        <authorList>
            <consortium name="US DOE Joint Genome Institute"/>
            <person name="Copeland A."/>
            <person name="Lucas S."/>
            <person name="Lapidus A."/>
            <person name="Barry K."/>
            <person name="Detter J.C."/>
            <person name="Glavina T."/>
            <person name="Hammon N."/>
            <person name="Israni S."/>
            <person name="Pitluck S."/>
            <person name="Schmutz J."/>
            <person name="Martinez M."/>
            <person name="Larimer F."/>
            <person name="Land M."/>
            <person name="Kyrpides N."/>
            <person name="Ivanova N."/>
            <person name="Richardson P."/>
        </authorList>
    </citation>
    <scope>NUCLEOTIDE SEQUENCE [LARGE SCALE GENOMIC DNA]</scope>
    <source>
        <strain>CC9605</strain>
    </source>
</reference>
<name>DAPA_SYNSC</name>